<reference key="1">
    <citation type="journal article" date="2006" name="J. Bacteriol.">
        <title>The genome sequence of the obligately chemolithoautotrophic, facultatively anaerobic bacterium Thiobacillus denitrificans.</title>
        <authorList>
            <person name="Beller H.R."/>
            <person name="Chain P.S."/>
            <person name="Letain T.E."/>
            <person name="Chakicherla A."/>
            <person name="Larimer F.W."/>
            <person name="Richardson P.M."/>
            <person name="Coleman M.A."/>
            <person name="Wood A.P."/>
            <person name="Kelly D.P."/>
        </authorList>
    </citation>
    <scope>NUCLEOTIDE SEQUENCE [LARGE SCALE GENOMIC DNA]</scope>
    <source>
        <strain>ATCC 25259 / T1</strain>
    </source>
</reference>
<sequence>MAAGKEIRTKIKSVENTRKITKAMEMVAASKMRKAQDRMKAARPYAEKIARVATHLAYAHPEYKHPFVIARDDVKRVGLIIVTSDKGLCGGLNTNAFRVVVNQMKQWEAAGVGIDVTAIGNKGLGFMQRLGANVVSQLTGVGDTPHMDKLIGPVKIMLDAYLEGRIDALYLVYNRFINTMKQEPTLTQLLPLAKMESTEEASLKTHWDYIYEPDAKPVVDAMLMRYIESLVYQGVAENIASEQSARMVAMKAASDNAKNVIGELKLVYNKTRQAAITKELSEIVAGAAAV</sequence>
<proteinExistence type="inferred from homology"/>
<protein>
    <recommendedName>
        <fullName evidence="1">ATP synthase gamma chain</fullName>
    </recommendedName>
    <alternativeName>
        <fullName evidence="1">ATP synthase F1 sector gamma subunit</fullName>
    </alternativeName>
    <alternativeName>
        <fullName evidence="1">F-ATPase gamma subunit</fullName>
    </alternativeName>
</protein>
<gene>
    <name evidence="1" type="primary">atpG</name>
    <name type="ordered locus">Tbd_2798</name>
</gene>
<keyword id="KW-0066">ATP synthesis</keyword>
<keyword id="KW-0997">Cell inner membrane</keyword>
<keyword id="KW-1003">Cell membrane</keyword>
<keyword id="KW-0139">CF(1)</keyword>
<keyword id="KW-0375">Hydrogen ion transport</keyword>
<keyword id="KW-0406">Ion transport</keyword>
<keyword id="KW-0472">Membrane</keyword>
<keyword id="KW-1185">Reference proteome</keyword>
<keyword id="KW-0813">Transport</keyword>
<name>ATPG_THIDA</name>
<accession>Q3SF65</accession>
<organism>
    <name type="scientific">Thiobacillus denitrificans (strain ATCC 25259 / T1)</name>
    <dbReference type="NCBI Taxonomy" id="292415"/>
    <lineage>
        <taxon>Bacteria</taxon>
        <taxon>Pseudomonadati</taxon>
        <taxon>Pseudomonadota</taxon>
        <taxon>Betaproteobacteria</taxon>
        <taxon>Nitrosomonadales</taxon>
        <taxon>Thiobacillaceae</taxon>
        <taxon>Thiobacillus</taxon>
    </lineage>
</organism>
<evidence type="ECO:0000255" key="1">
    <source>
        <dbReference type="HAMAP-Rule" id="MF_00815"/>
    </source>
</evidence>
<comment type="function">
    <text evidence="1">Produces ATP from ADP in the presence of a proton gradient across the membrane. The gamma chain is believed to be important in regulating ATPase activity and the flow of protons through the CF(0) complex.</text>
</comment>
<comment type="subunit">
    <text evidence="1">F-type ATPases have 2 components, CF(1) - the catalytic core - and CF(0) - the membrane proton channel. CF(1) has five subunits: alpha(3), beta(3), gamma(1), delta(1), epsilon(1). CF(0) has three main subunits: a, b and c.</text>
</comment>
<comment type="subcellular location">
    <subcellularLocation>
        <location evidence="1">Cell inner membrane</location>
        <topology evidence="1">Peripheral membrane protein</topology>
    </subcellularLocation>
</comment>
<comment type="similarity">
    <text evidence="1">Belongs to the ATPase gamma chain family.</text>
</comment>
<feature type="chain" id="PRO_1000053370" description="ATP synthase gamma chain">
    <location>
        <begin position="1"/>
        <end position="290"/>
    </location>
</feature>
<dbReference type="EMBL" id="CP000116">
    <property type="protein sequence ID" value="AAZ98751.1"/>
    <property type="molecule type" value="Genomic_DNA"/>
</dbReference>
<dbReference type="RefSeq" id="WP_011313310.1">
    <property type="nucleotide sequence ID" value="NC_007404.1"/>
</dbReference>
<dbReference type="SMR" id="Q3SF65"/>
<dbReference type="STRING" id="292415.Tbd_2798"/>
<dbReference type="KEGG" id="tbd:Tbd_2798"/>
<dbReference type="eggNOG" id="COG0224">
    <property type="taxonomic scope" value="Bacteria"/>
</dbReference>
<dbReference type="HOGENOM" id="CLU_050669_0_1_4"/>
<dbReference type="OrthoDB" id="9812769at2"/>
<dbReference type="Proteomes" id="UP000008291">
    <property type="component" value="Chromosome"/>
</dbReference>
<dbReference type="GO" id="GO:0005886">
    <property type="term" value="C:plasma membrane"/>
    <property type="evidence" value="ECO:0007669"/>
    <property type="project" value="UniProtKB-SubCell"/>
</dbReference>
<dbReference type="GO" id="GO:0045259">
    <property type="term" value="C:proton-transporting ATP synthase complex"/>
    <property type="evidence" value="ECO:0007669"/>
    <property type="project" value="UniProtKB-KW"/>
</dbReference>
<dbReference type="GO" id="GO:0005524">
    <property type="term" value="F:ATP binding"/>
    <property type="evidence" value="ECO:0007669"/>
    <property type="project" value="UniProtKB-UniRule"/>
</dbReference>
<dbReference type="GO" id="GO:0046933">
    <property type="term" value="F:proton-transporting ATP synthase activity, rotational mechanism"/>
    <property type="evidence" value="ECO:0007669"/>
    <property type="project" value="UniProtKB-UniRule"/>
</dbReference>
<dbReference type="GO" id="GO:0042777">
    <property type="term" value="P:proton motive force-driven plasma membrane ATP synthesis"/>
    <property type="evidence" value="ECO:0007669"/>
    <property type="project" value="UniProtKB-UniRule"/>
</dbReference>
<dbReference type="CDD" id="cd12151">
    <property type="entry name" value="F1-ATPase_gamma"/>
    <property type="match status" value="1"/>
</dbReference>
<dbReference type="FunFam" id="1.10.287.80:FF:000005">
    <property type="entry name" value="ATP synthase gamma chain"/>
    <property type="match status" value="1"/>
</dbReference>
<dbReference type="Gene3D" id="3.40.1380.10">
    <property type="match status" value="1"/>
</dbReference>
<dbReference type="Gene3D" id="1.10.287.80">
    <property type="entry name" value="ATP synthase, gamma subunit, helix hairpin domain"/>
    <property type="match status" value="1"/>
</dbReference>
<dbReference type="HAMAP" id="MF_00815">
    <property type="entry name" value="ATP_synth_gamma_bact"/>
    <property type="match status" value="1"/>
</dbReference>
<dbReference type="InterPro" id="IPR035968">
    <property type="entry name" value="ATP_synth_F1_ATPase_gsu"/>
</dbReference>
<dbReference type="InterPro" id="IPR000131">
    <property type="entry name" value="ATP_synth_F1_gsu"/>
</dbReference>
<dbReference type="InterPro" id="IPR023632">
    <property type="entry name" value="ATP_synth_F1_gsu_CS"/>
</dbReference>
<dbReference type="NCBIfam" id="TIGR01146">
    <property type="entry name" value="ATPsyn_F1gamma"/>
    <property type="match status" value="1"/>
</dbReference>
<dbReference type="NCBIfam" id="NF004144">
    <property type="entry name" value="PRK05621.1-1"/>
    <property type="match status" value="1"/>
</dbReference>
<dbReference type="PANTHER" id="PTHR11693">
    <property type="entry name" value="ATP SYNTHASE GAMMA CHAIN"/>
    <property type="match status" value="1"/>
</dbReference>
<dbReference type="PANTHER" id="PTHR11693:SF22">
    <property type="entry name" value="ATP SYNTHASE SUBUNIT GAMMA, MITOCHONDRIAL"/>
    <property type="match status" value="1"/>
</dbReference>
<dbReference type="Pfam" id="PF00231">
    <property type="entry name" value="ATP-synt"/>
    <property type="match status" value="1"/>
</dbReference>
<dbReference type="PRINTS" id="PR00126">
    <property type="entry name" value="ATPASEGAMMA"/>
</dbReference>
<dbReference type="SUPFAM" id="SSF52943">
    <property type="entry name" value="ATP synthase (F1-ATPase), gamma subunit"/>
    <property type="match status" value="1"/>
</dbReference>
<dbReference type="PROSITE" id="PS00153">
    <property type="entry name" value="ATPASE_GAMMA"/>
    <property type="match status" value="1"/>
</dbReference>